<evidence type="ECO:0000255" key="1">
    <source>
        <dbReference type="HAMAP-Rule" id="MF_00340"/>
    </source>
</evidence>
<evidence type="ECO:0000305" key="2"/>
<comment type="similarity">
    <text evidence="1">Belongs to the bacterial ribosomal protein bL32 family.</text>
</comment>
<keyword id="KW-0687">Ribonucleoprotein</keyword>
<keyword id="KW-0689">Ribosomal protein</keyword>
<dbReference type="EMBL" id="CP001279">
    <property type="protein sequence ID" value="ACM92778.1"/>
    <property type="molecule type" value="Genomic_DNA"/>
</dbReference>
<dbReference type="RefSeq" id="WP_015901830.1">
    <property type="nucleotide sequence ID" value="NC_012115.1"/>
</dbReference>
<dbReference type="SMR" id="B9L889"/>
<dbReference type="STRING" id="598659.NAMH_0425"/>
<dbReference type="KEGG" id="nam:NAMH_0425"/>
<dbReference type="eggNOG" id="COG0333">
    <property type="taxonomic scope" value="Bacteria"/>
</dbReference>
<dbReference type="HOGENOM" id="CLU_129084_1_3_7"/>
<dbReference type="OrthoDB" id="9801927at2"/>
<dbReference type="Proteomes" id="UP000000448">
    <property type="component" value="Chromosome"/>
</dbReference>
<dbReference type="GO" id="GO:0015934">
    <property type="term" value="C:large ribosomal subunit"/>
    <property type="evidence" value="ECO:0007669"/>
    <property type="project" value="InterPro"/>
</dbReference>
<dbReference type="GO" id="GO:0003735">
    <property type="term" value="F:structural constituent of ribosome"/>
    <property type="evidence" value="ECO:0007669"/>
    <property type="project" value="InterPro"/>
</dbReference>
<dbReference type="GO" id="GO:0006412">
    <property type="term" value="P:translation"/>
    <property type="evidence" value="ECO:0007669"/>
    <property type="project" value="UniProtKB-UniRule"/>
</dbReference>
<dbReference type="HAMAP" id="MF_00340">
    <property type="entry name" value="Ribosomal_bL32"/>
    <property type="match status" value="1"/>
</dbReference>
<dbReference type="InterPro" id="IPR002677">
    <property type="entry name" value="Ribosomal_bL32"/>
</dbReference>
<dbReference type="InterPro" id="IPR044957">
    <property type="entry name" value="Ribosomal_bL32_bact"/>
</dbReference>
<dbReference type="InterPro" id="IPR011332">
    <property type="entry name" value="Ribosomal_zn-bd"/>
</dbReference>
<dbReference type="NCBIfam" id="TIGR01031">
    <property type="entry name" value="rpmF_bact"/>
    <property type="match status" value="1"/>
</dbReference>
<dbReference type="PANTHER" id="PTHR35534">
    <property type="entry name" value="50S RIBOSOMAL PROTEIN L32"/>
    <property type="match status" value="1"/>
</dbReference>
<dbReference type="PANTHER" id="PTHR35534:SF1">
    <property type="entry name" value="LARGE RIBOSOMAL SUBUNIT PROTEIN BL32"/>
    <property type="match status" value="1"/>
</dbReference>
<dbReference type="Pfam" id="PF01783">
    <property type="entry name" value="Ribosomal_L32p"/>
    <property type="match status" value="1"/>
</dbReference>
<dbReference type="SUPFAM" id="SSF57829">
    <property type="entry name" value="Zn-binding ribosomal proteins"/>
    <property type="match status" value="1"/>
</dbReference>
<gene>
    <name evidence="1" type="primary">rpmF</name>
    <name type="ordered locus">NAMH_0425</name>
</gene>
<reference key="1">
    <citation type="journal article" date="2009" name="PLoS Genet.">
        <title>Adaptations to submarine hydrothermal environments exemplified by the genome of Nautilia profundicola.</title>
        <authorList>
            <person name="Campbell B.J."/>
            <person name="Smith J.L."/>
            <person name="Hanson T.E."/>
            <person name="Klotz M.G."/>
            <person name="Stein L.Y."/>
            <person name="Lee C.K."/>
            <person name="Wu D."/>
            <person name="Robinson J.M."/>
            <person name="Khouri H.M."/>
            <person name="Eisen J.A."/>
            <person name="Cary S.C."/>
        </authorList>
    </citation>
    <scope>NUCLEOTIDE SEQUENCE [LARGE SCALE GENOMIC DNA]</scope>
    <source>
        <strain>ATCC BAA-1463 / DSM 18972 / AmH</strain>
    </source>
</reference>
<sequence>MAVPKRRNSKTRGAKRRTHYKIKLSSVIKCSNCGAYKRPHRVCPSCGEY</sequence>
<protein>
    <recommendedName>
        <fullName evidence="1">Large ribosomal subunit protein bL32</fullName>
    </recommendedName>
    <alternativeName>
        <fullName evidence="2">50S ribosomal protein L32</fullName>
    </alternativeName>
</protein>
<name>RL32_NAUPA</name>
<accession>B9L889</accession>
<feature type="chain" id="PRO_1000195989" description="Large ribosomal subunit protein bL32">
    <location>
        <begin position="1"/>
        <end position="49"/>
    </location>
</feature>
<proteinExistence type="inferred from homology"/>
<organism>
    <name type="scientific">Nautilia profundicola (strain ATCC BAA-1463 / DSM 18972 / AmH)</name>
    <dbReference type="NCBI Taxonomy" id="598659"/>
    <lineage>
        <taxon>Bacteria</taxon>
        <taxon>Pseudomonadati</taxon>
        <taxon>Campylobacterota</taxon>
        <taxon>Epsilonproteobacteria</taxon>
        <taxon>Nautiliales</taxon>
        <taxon>Nautiliaceae</taxon>
        <taxon>Nautilia</taxon>
    </lineage>
</organism>